<comment type="function">
    <text evidence="1">Catalyzes the ATP-dependent amination of UTP to CTP with either L-glutamine or ammonia as the source of nitrogen. Regulates intracellular CTP levels through interactions with the four ribonucleotide triphosphates.</text>
</comment>
<comment type="catalytic activity">
    <reaction evidence="1">
        <text>UTP + L-glutamine + ATP + H2O = CTP + L-glutamate + ADP + phosphate + 2 H(+)</text>
        <dbReference type="Rhea" id="RHEA:26426"/>
        <dbReference type="ChEBI" id="CHEBI:15377"/>
        <dbReference type="ChEBI" id="CHEBI:15378"/>
        <dbReference type="ChEBI" id="CHEBI:29985"/>
        <dbReference type="ChEBI" id="CHEBI:30616"/>
        <dbReference type="ChEBI" id="CHEBI:37563"/>
        <dbReference type="ChEBI" id="CHEBI:43474"/>
        <dbReference type="ChEBI" id="CHEBI:46398"/>
        <dbReference type="ChEBI" id="CHEBI:58359"/>
        <dbReference type="ChEBI" id="CHEBI:456216"/>
        <dbReference type="EC" id="6.3.4.2"/>
    </reaction>
</comment>
<comment type="catalytic activity">
    <reaction evidence="1">
        <text>L-glutamine + H2O = L-glutamate + NH4(+)</text>
        <dbReference type="Rhea" id="RHEA:15889"/>
        <dbReference type="ChEBI" id="CHEBI:15377"/>
        <dbReference type="ChEBI" id="CHEBI:28938"/>
        <dbReference type="ChEBI" id="CHEBI:29985"/>
        <dbReference type="ChEBI" id="CHEBI:58359"/>
    </reaction>
</comment>
<comment type="catalytic activity">
    <reaction evidence="1">
        <text>UTP + NH4(+) + ATP = CTP + ADP + phosphate + 2 H(+)</text>
        <dbReference type="Rhea" id="RHEA:16597"/>
        <dbReference type="ChEBI" id="CHEBI:15378"/>
        <dbReference type="ChEBI" id="CHEBI:28938"/>
        <dbReference type="ChEBI" id="CHEBI:30616"/>
        <dbReference type="ChEBI" id="CHEBI:37563"/>
        <dbReference type="ChEBI" id="CHEBI:43474"/>
        <dbReference type="ChEBI" id="CHEBI:46398"/>
        <dbReference type="ChEBI" id="CHEBI:456216"/>
    </reaction>
</comment>
<comment type="activity regulation">
    <text evidence="1">Allosterically activated by GTP, when glutamine is the substrate; GTP has no effect on the reaction when ammonia is the substrate. The allosteric effector GTP functions by stabilizing the protein conformation that binds the tetrahedral intermediate(s) formed during glutamine hydrolysis. Inhibited by the product CTP, via allosteric rather than competitive inhibition.</text>
</comment>
<comment type="pathway">
    <text evidence="1">Pyrimidine metabolism; CTP biosynthesis via de novo pathway; CTP from UDP: step 2/2.</text>
</comment>
<comment type="subunit">
    <text evidence="1">Homotetramer.</text>
</comment>
<comment type="miscellaneous">
    <text evidence="1">CTPSs have evolved a hybrid strategy for distinguishing between UTP and CTP. The overlapping regions of the product feedback inhibitory and substrate sites recognize a common feature in both compounds, the triphosphate moiety. To differentiate isosteric substrate and product pyrimidine rings, an additional pocket far from the expected kinase/ligase catalytic site, specifically recognizes the cytosine and ribose portions of the product inhibitor.</text>
</comment>
<comment type="similarity">
    <text evidence="1">Belongs to the CTP synthase family.</text>
</comment>
<gene>
    <name evidence="1" type="primary">pyrG</name>
    <name type="ordered locus">mma_1269</name>
</gene>
<organism>
    <name type="scientific">Janthinobacterium sp. (strain Marseille)</name>
    <name type="common">Minibacterium massiliensis</name>
    <dbReference type="NCBI Taxonomy" id="375286"/>
    <lineage>
        <taxon>Bacteria</taxon>
        <taxon>Pseudomonadati</taxon>
        <taxon>Pseudomonadota</taxon>
        <taxon>Betaproteobacteria</taxon>
        <taxon>Burkholderiales</taxon>
        <taxon>Oxalobacteraceae</taxon>
        <taxon>Janthinobacterium</taxon>
    </lineage>
</organism>
<protein>
    <recommendedName>
        <fullName evidence="1">CTP synthase</fullName>
        <ecNumber evidence="1">6.3.4.2</ecNumber>
    </recommendedName>
    <alternativeName>
        <fullName evidence="1">Cytidine 5'-triphosphate synthase</fullName>
    </alternativeName>
    <alternativeName>
        <fullName evidence="1">Cytidine triphosphate synthetase</fullName>
        <shortName evidence="1">CTP synthetase</shortName>
        <shortName evidence="1">CTPS</shortName>
    </alternativeName>
    <alternativeName>
        <fullName evidence="1">UTP--ammonia ligase</fullName>
    </alternativeName>
</protein>
<proteinExistence type="inferred from homology"/>
<evidence type="ECO:0000255" key="1">
    <source>
        <dbReference type="HAMAP-Rule" id="MF_01227"/>
    </source>
</evidence>
<reference key="1">
    <citation type="journal article" date="2007" name="PLoS Genet.">
        <title>Genome analysis of Minibacterium massiliensis highlights the convergent evolution of water-living bacteria.</title>
        <authorList>
            <person name="Audic S."/>
            <person name="Robert C."/>
            <person name="Campagna B."/>
            <person name="Parinello H."/>
            <person name="Claverie J.-M."/>
            <person name="Raoult D."/>
            <person name="Drancourt M."/>
        </authorList>
    </citation>
    <scope>NUCLEOTIDE SEQUENCE [LARGE SCALE GENOMIC DNA]</scope>
    <source>
        <strain>Marseille</strain>
    </source>
</reference>
<accession>A6SXG2</accession>
<sequence>MTKFVFVTGGVVSSLGKGIAAASLAAILESRGLKVTLLKLDPYINVDPGTMSPFQHGEVFVTEDGAETDLDLGHYERFITAKMRKVNNFTTGQIYESVIRKERRGEYLGKTVQVIPHITNEIQDYIHRGAEGFDVALVEIGGTVGDIESLPFLEAARQLSLRAGRNAAAFVHLTLVPYLASAGELKTKPTQHSVQKLREIGISPDALLCRADRQIPDDERAKISLFSNVQEDAVISVWDADTIYKIPQMLHDQGLDRIVCEKLALSPKPADLSMWTKLVHSLENPKDSVTIGMVGKYVDLTESYKSLTEALRHAGIHTESRVNIEYLDSEEIENTGPQCLAKYDAILVPGGFGKRGVEGKIASARFARESKIPYLGICLGMQVALIEYARDVAGLTKANSTEFDADTEQPVVALINEWQNHDGKVERRDANSDLGGTMRLGAQTCAVKPGTLAAEIYGSEVTERHRHRYEANNHYLGRVEDAGLIVSARTPTESLCEIMELPRTVHPWYVGVQYHPEFKSTPRDGHPLFISFIKAALAHKHAGQAKK</sequence>
<feature type="chain" id="PRO_1000139474" description="CTP synthase">
    <location>
        <begin position="1"/>
        <end position="547"/>
    </location>
</feature>
<feature type="domain" description="Glutamine amidotransferase type-1" evidence="1">
    <location>
        <begin position="290"/>
        <end position="542"/>
    </location>
</feature>
<feature type="region of interest" description="Amidoligase domain" evidence="1">
    <location>
        <begin position="1"/>
        <end position="265"/>
    </location>
</feature>
<feature type="active site" description="Nucleophile; for glutamine hydrolysis" evidence="1">
    <location>
        <position position="378"/>
    </location>
</feature>
<feature type="active site" evidence="1">
    <location>
        <position position="515"/>
    </location>
</feature>
<feature type="active site" evidence="1">
    <location>
        <position position="517"/>
    </location>
</feature>
<feature type="binding site" evidence="1">
    <location>
        <position position="13"/>
    </location>
    <ligand>
        <name>CTP</name>
        <dbReference type="ChEBI" id="CHEBI:37563"/>
        <note>allosteric inhibitor</note>
    </ligand>
</feature>
<feature type="binding site" evidence="1">
    <location>
        <position position="13"/>
    </location>
    <ligand>
        <name>UTP</name>
        <dbReference type="ChEBI" id="CHEBI:46398"/>
    </ligand>
</feature>
<feature type="binding site" evidence="1">
    <location>
        <begin position="14"/>
        <end position="19"/>
    </location>
    <ligand>
        <name>ATP</name>
        <dbReference type="ChEBI" id="CHEBI:30616"/>
    </ligand>
</feature>
<feature type="binding site" evidence="1">
    <location>
        <position position="71"/>
    </location>
    <ligand>
        <name>ATP</name>
        <dbReference type="ChEBI" id="CHEBI:30616"/>
    </ligand>
</feature>
<feature type="binding site" evidence="1">
    <location>
        <position position="71"/>
    </location>
    <ligand>
        <name>Mg(2+)</name>
        <dbReference type="ChEBI" id="CHEBI:18420"/>
    </ligand>
</feature>
<feature type="binding site" evidence="1">
    <location>
        <position position="139"/>
    </location>
    <ligand>
        <name>Mg(2+)</name>
        <dbReference type="ChEBI" id="CHEBI:18420"/>
    </ligand>
</feature>
<feature type="binding site" evidence="1">
    <location>
        <begin position="146"/>
        <end position="148"/>
    </location>
    <ligand>
        <name>CTP</name>
        <dbReference type="ChEBI" id="CHEBI:37563"/>
        <note>allosteric inhibitor</note>
    </ligand>
</feature>
<feature type="binding site" evidence="1">
    <location>
        <begin position="186"/>
        <end position="191"/>
    </location>
    <ligand>
        <name>CTP</name>
        <dbReference type="ChEBI" id="CHEBI:37563"/>
        <note>allosteric inhibitor</note>
    </ligand>
</feature>
<feature type="binding site" evidence="1">
    <location>
        <begin position="186"/>
        <end position="191"/>
    </location>
    <ligand>
        <name>UTP</name>
        <dbReference type="ChEBI" id="CHEBI:46398"/>
    </ligand>
</feature>
<feature type="binding site" evidence="1">
    <location>
        <position position="222"/>
    </location>
    <ligand>
        <name>CTP</name>
        <dbReference type="ChEBI" id="CHEBI:37563"/>
        <note>allosteric inhibitor</note>
    </ligand>
</feature>
<feature type="binding site" evidence="1">
    <location>
        <position position="222"/>
    </location>
    <ligand>
        <name>UTP</name>
        <dbReference type="ChEBI" id="CHEBI:46398"/>
    </ligand>
</feature>
<feature type="binding site" evidence="1">
    <location>
        <position position="351"/>
    </location>
    <ligand>
        <name>L-glutamine</name>
        <dbReference type="ChEBI" id="CHEBI:58359"/>
    </ligand>
</feature>
<feature type="binding site" evidence="1">
    <location>
        <begin position="379"/>
        <end position="382"/>
    </location>
    <ligand>
        <name>L-glutamine</name>
        <dbReference type="ChEBI" id="CHEBI:58359"/>
    </ligand>
</feature>
<feature type="binding site" evidence="1">
    <location>
        <position position="402"/>
    </location>
    <ligand>
        <name>L-glutamine</name>
        <dbReference type="ChEBI" id="CHEBI:58359"/>
    </ligand>
</feature>
<feature type="binding site" evidence="1">
    <location>
        <position position="468"/>
    </location>
    <ligand>
        <name>L-glutamine</name>
        <dbReference type="ChEBI" id="CHEBI:58359"/>
    </ligand>
</feature>
<keyword id="KW-0067">ATP-binding</keyword>
<keyword id="KW-0315">Glutamine amidotransferase</keyword>
<keyword id="KW-0436">Ligase</keyword>
<keyword id="KW-0460">Magnesium</keyword>
<keyword id="KW-0479">Metal-binding</keyword>
<keyword id="KW-0547">Nucleotide-binding</keyword>
<keyword id="KW-0665">Pyrimidine biosynthesis</keyword>
<name>PYRG_JANMA</name>
<dbReference type="EC" id="6.3.4.2" evidence="1"/>
<dbReference type="EMBL" id="CP000269">
    <property type="protein sequence ID" value="ABR88798.1"/>
    <property type="molecule type" value="Genomic_DNA"/>
</dbReference>
<dbReference type="RefSeq" id="WP_012079126.1">
    <property type="nucleotide sequence ID" value="NC_009659.1"/>
</dbReference>
<dbReference type="SMR" id="A6SXG2"/>
<dbReference type="STRING" id="375286.mma_1269"/>
<dbReference type="MEROPS" id="C26.964"/>
<dbReference type="KEGG" id="mms:mma_1269"/>
<dbReference type="eggNOG" id="COG0504">
    <property type="taxonomic scope" value="Bacteria"/>
</dbReference>
<dbReference type="HOGENOM" id="CLU_011675_5_0_4"/>
<dbReference type="OrthoDB" id="9801107at2"/>
<dbReference type="UniPathway" id="UPA00159">
    <property type="reaction ID" value="UER00277"/>
</dbReference>
<dbReference type="Proteomes" id="UP000006388">
    <property type="component" value="Chromosome"/>
</dbReference>
<dbReference type="GO" id="GO:0005829">
    <property type="term" value="C:cytosol"/>
    <property type="evidence" value="ECO:0007669"/>
    <property type="project" value="TreeGrafter"/>
</dbReference>
<dbReference type="GO" id="GO:0005524">
    <property type="term" value="F:ATP binding"/>
    <property type="evidence" value="ECO:0007669"/>
    <property type="project" value="UniProtKB-KW"/>
</dbReference>
<dbReference type="GO" id="GO:0003883">
    <property type="term" value="F:CTP synthase activity"/>
    <property type="evidence" value="ECO:0007669"/>
    <property type="project" value="UniProtKB-UniRule"/>
</dbReference>
<dbReference type="GO" id="GO:0004359">
    <property type="term" value="F:glutaminase activity"/>
    <property type="evidence" value="ECO:0007669"/>
    <property type="project" value="RHEA"/>
</dbReference>
<dbReference type="GO" id="GO:0042802">
    <property type="term" value="F:identical protein binding"/>
    <property type="evidence" value="ECO:0007669"/>
    <property type="project" value="TreeGrafter"/>
</dbReference>
<dbReference type="GO" id="GO:0046872">
    <property type="term" value="F:metal ion binding"/>
    <property type="evidence" value="ECO:0007669"/>
    <property type="project" value="UniProtKB-KW"/>
</dbReference>
<dbReference type="GO" id="GO:0044210">
    <property type="term" value="P:'de novo' CTP biosynthetic process"/>
    <property type="evidence" value="ECO:0007669"/>
    <property type="project" value="UniProtKB-UniRule"/>
</dbReference>
<dbReference type="GO" id="GO:0019856">
    <property type="term" value="P:pyrimidine nucleobase biosynthetic process"/>
    <property type="evidence" value="ECO:0007669"/>
    <property type="project" value="TreeGrafter"/>
</dbReference>
<dbReference type="CDD" id="cd03113">
    <property type="entry name" value="CTPS_N"/>
    <property type="match status" value="1"/>
</dbReference>
<dbReference type="CDD" id="cd01746">
    <property type="entry name" value="GATase1_CTP_Synthase"/>
    <property type="match status" value="1"/>
</dbReference>
<dbReference type="FunFam" id="3.40.50.300:FF:000009">
    <property type="entry name" value="CTP synthase"/>
    <property type="match status" value="1"/>
</dbReference>
<dbReference type="FunFam" id="3.40.50.880:FF:000002">
    <property type="entry name" value="CTP synthase"/>
    <property type="match status" value="1"/>
</dbReference>
<dbReference type="Gene3D" id="3.40.50.880">
    <property type="match status" value="1"/>
</dbReference>
<dbReference type="Gene3D" id="3.40.50.300">
    <property type="entry name" value="P-loop containing nucleotide triphosphate hydrolases"/>
    <property type="match status" value="1"/>
</dbReference>
<dbReference type="HAMAP" id="MF_01227">
    <property type="entry name" value="PyrG"/>
    <property type="match status" value="1"/>
</dbReference>
<dbReference type="InterPro" id="IPR029062">
    <property type="entry name" value="Class_I_gatase-like"/>
</dbReference>
<dbReference type="InterPro" id="IPR004468">
    <property type="entry name" value="CTP_synthase"/>
</dbReference>
<dbReference type="InterPro" id="IPR017456">
    <property type="entry name" value="CTP_synthase_N"/>
</dbReference>
<dbReference type="InterPro" id="IPR017926">
    <property type="entry name" value="GATASE"/>
</dbReference>
<dbReference type="InterPro" id="IPR033828">
    <property type="entry name" value="GATase1_CTP_Synthase"/>
</dbReference>
<dbReference type="InterPro" id="IPR027417">
    <property type="entry name" value="P-loop_NTPase"/>
</dbReference>
<dbReference type="NCBIfam" id="NF003792">
    <property type="entry name" value="PRK05380.1"/>
    <property type="match status" value="1"/>
</dbReference>
<dbReference type="NCBIfam" id="TIGR00337">
    <property type="entry name" value="PyrG"/>
    <property type="match status" value="1"/>
</dbReference>
<dbReference type="PANTHER" id="PTHR11550">
    <property type="entry name" value="CTP SYNTHASE"/>
    <property type="match status" value="1"/>
</dbReference>
<dbReference type="PANTHER" id="PTHR11550:SF0">
    <property type="entry name" value="CTP SYNTHASE-RELATED"/>
    <property type="match status" value="1"/>
</dbReference>
<dbReference type="Pfam" id="PF06418">
    <property type="entry name" value="CTP_synth_N"/>
    <property type="match status" value="1"/>
</dbReference>
<dbReference type="Pfam" id="PF00117">
    <property type="entry name" value="GATase"/>
    <property type="match status" value="1"/>
</dbReference>
<dbReference type="SUPFAM" id="SSF52317">
    <property type="entry name" value="Class I glutamine amidotransferase-like"/>
    <property type="match status" value="1"/>
</dbReference>
<dbReference type="SUPFAM" id="SSF52540">
    <property type="entry name" value="P-loop containing nucleoside triphosphate hydrolases"/>
    <property type="match status" value="1"/>
</dbReference>
<dbReference type="PROSITE" id="PS51273">
    <property type="entry name" value="GATASE_TYPE_1"/>
    <property type="match status" value="1"/>
</dbReference>